<gene>
    <name type="primary">ansA</name>
    <name type="ordered locus">Z2801</name>
    <name type="ordered locus">ECs2474</name>
</gene>
<sequence length="338" mass="37127">MQKKSIYVAYTGGTIGMQRSEQGYIPVSGHLQRQLALMPEFHRPEMPDFTIHEYTPLMDSSDMTPEDWQHIAEDIKAHYDDYDGFVILHGTDTMAYTASALSFMLENLGKPVIVTGSQIPLAELRSDGQINLLNALYVAANYPINEVTLFFNNRLYRGNRTTKAHADGFDAFASPNLPPLLEAGIHIRRLNTPPAPHGEGELIVHPITPQPIGVVTIYPGISADVVRNFLRQPVKALILRSYGVGNAPQNKAFLQELQEASDRGIVVVNLTQCMSGKVNMGGYATGNALAHAGVIGGADMTVEATLTKLHYLLSQELDTETIRKAMSQNLRGELTPDD</sequence>
<comment type="catalytic activity">
    <reaction>
        <text>L-asparagine + H2O = L-aspartate + NH4(+)</text>
        <dbReference type="Rhea" id="RHEA:21016"/>
        <dbReference type="ChEBI" id="CHEBI:15377"/>
        <dbReference type="ChEBI" id="CHEBI:28938"/>
        <dbReference type="ChEBI" id="CHEBI:29991"/>
        <dbReference type="ChEBI" id="CHEBI:58048"/>
        <dbReference type="EC" id="3.5.1.1"/>
    </reaction>
</comment>
<comment type="subunit">
    <text evidence="1">Homotetramer.</text>
</comment>
<comment type="subcellular location">
    <subcellularLocation>
        <location evidence="1">Cytoplasm</location>
    </subcellularLocation>
</comment>
<comment type="miscellaneous">
    <text>E.coli contains two L-asparaginase isoenzymes: L-asparaginase I, a low-affinity enzyme located in the cytoplasm, and L-asparaginase II, a high-affinity secreted enzyme.</text>
</comment>
<comment type="similarity">
    <text evidence="5">Belongs to the asparaginase 1 family.</text>
</comment>
<protein>
    <recommendedName>
        <fullName>L-asparaginase 1</fullName>
        <ecNumber>3.5.1.1</ecNumber>
    </recommendedName>
    <alternativeName>
        <fullName>L-asparaginase I</fullName>
        <shortName>L-ASNase I</shortName>
    </alternativeName>
    <alternativeName>
        <fullName>L-asparagine amidohydrolase I</fullName>
    </alternativeName>
</protein>
<organism>
    <name type="scientific">Escherichia coli O157:H7</name>
    <dbReference type="NCBI Taxonomy" id="83334"/>
    <lineage>
        <taxon>Bacteria</taxon>
        <taxon>Pseudomonadati</taxon>
        <taxon>Pseudomonadota</taxon>
        <taxon>Gammaproteobacteria</taxon>
        <taxon>Enterobacterales</taxon>
        <taxon>Enterobacteriaceae</taxon>
        <taxon>Escherichia</taxon>
    </lineage>
</organism>
<reference key="1">
    <citation type="journal article" date="2001" name="Nature">
        <title>Genome sequence of enterohaemorrhagic Escherichia coli O157:H7.</title>
        <authorList>
            <person name="Perna N.T."/>
            <person name="Plunkett G. III"/>
            <person name="Burland V."/>
            <person name="Mau B."/>
            <person name="Glasner J.D."/>
            <person name="Rose D.J."/>
            <person name="Mayhew G.F."/>
            <person name="Evans P.S."/>
            <person name="Gregor J."/>
            <person name="Kirkpatrick H.A."/>
            <person name="Posfai G."/>
            <person name="Hackett J."/>
            <person name="Klink S."/>
            <person name="Boutin A."/>
            <person name="Shao Y."/>
            <person name="Miller L."/>
            <person name="Grotbeck E.J."/>
            <person name="Davis N.W."/>
            <person name="Lim A."/>
            <person name="Dimalanta E.T."/>
            <person name="Potamousis K."/>
            <person name="Apodaca J."/>
            <person name="Anantharaman T.S."/>
            <person name="Lin J."/>
            <person name="Yen G."/>
            <person name="Schwartz D.C."/>
            <person name="Welch R.A."/>
            <person name="Blattner F.R."/>
        </authorList>
    </citation>
    <scope>NUCLEOTIDE SEQUENCE [LARGE SCALE GENOMIC DNA]</scope>
    <source>
        <strain>O157:H7 / EDL933 / ATCC 700927 / EHEC</strain>
    </source>
</reference>
<reference key="2">
    <citation type="journal article" date="2001" name="DNA Res.">
        <title>Complete genome sequence of enterohemorrhagic Escherichia coli O157:H7 and genomic comparison with a laboratory strain K-12.</title>
        <authorList>
            <person name="Hayashi T."/>
            <person name="Makino K."/>
            <person name="Ohnishi M."/>
            <person name="Kurokawa K."/>
            <person name="Ishii K."/>
            <person name="Yokoyama K."/>
            <person name="Han C.-G."/>
            <person name="Ohtsubo E."/>
            <person name="Nakayama K."/>
            <person name="Murata T."/>
            <person name="Tanaka M."/>
            <person name="Tobe T."/>
            <person name="Iida T."/>
            <person name="Takami H."/>
            <person name="Honda T."/>
            <person name="Sasakawa C."/>
            <person name="Ogasawara N."/>
            <person name="Yasunaga T."/>
            <person name="Kuhara S."/>
            <person name="Shiba T."/>
            <person name="Hattori M."/>
            <person name="Shinagawa H."/>
        </authorList>
    </citation>
    <scope>NUCLEOTIDE SEQUENCE [LARGE SCALE GENOMIC DNA]</scope>
    <source>
        <strain>O157:H7 / Sakai / RIMD 0509952 / EHEC</strain>
    </source>
</reference>
<name>ASPG1_ECO57</name>
<dbReference type="EC" id="3.5.1.1"/>
<dbReference type="EMBL" id="AE005174">
    <property type="protein sequence ID" value="AAG56754.1"/>
    <property type="molecule type" value="Genomic_DNA"/>
</dbReference>
<dbReference type="EMBL" id="BA000007">
    <property type="protein sequence ID" value="BAB35897.1"/>
    <property type="molecule type" value="Genomic_DNA"/>
</dbReference>
<dbReference type="PIR" id="B90938">
    <property type="entry name" value="B90938"/>
</dbReference>
<dbReference type="RefSeq" id="NP_310501.1">
    <property type="nucleotide sequence ID" value="NC_002695.1"/>
</dbReference>
<dbReference type="RefSeq" id="WP_001170162.1">
    <property type="nucleotide sequence ID" value="NZ_VOAI01000007.1"/>
</dbReference>
<dbReference type="SMR" id="P0A963"/>
<dbReference type="STRING" id="155864.Z2801"/>
<dbReference type="GeneID" id="916909"/>
<dbReference type="GeneID" id="93775984"/>
<dbReference type="KEGG" id="ece:Z2801"/>
<dbReference type="KEGG" id="ecs:ECs_2474"/>
<dbReference type="PATRIC" id="fig|386585.9.peg.2590"/>
<dbReference type="eggNOG" id="COG0252">
    <property type="taxonomic scope" value="Bacteria"/>
</dbReference>
<dbReference type="HOGENOM" id="CLU_019134_2_3_6"/>
<dbReference type="OMA" id="CEDMLPE"/>
<dbReference type="Proteomes" id="UP000000558">
    <property type="component" value="Chromosome"/>
</dbReference>
<dbReference type="Proteomes" id="UP000002519">
    <property type="component" value="Chromosome"/>
</dbReference>
<dbReference type="GO" id="GO:0005829">
    <property type="term" value="C:cytosol"/>
    <property type="evidence" value="ECO:0007669"/>
    <property type="project" value="TreeGrafter"/>
</dbReference>
<dbReference type="GO" id="GO:0004067">
    <property type="term" value="F:asparaginase activity"/>
    <property type="evidence" value="ECO:0007669"/>
    <property type="project" value="UniProtKB-EC"/>
</dbReference>
<dbReference type="GO" id="GO:0006520">
    <property type="term" value="P:amino acid metabolic process"/>
    <property type="evidence" value="ECO:0007669"/>
    <property type="project" value="InterPro"/>
</dbReference>
<dbReference type="CDD" id="cd08963">
    <property type="entry name" value="L-asparaginase_I"/>
    <property type="match status" value="1"/>
</dbReference>
<dbReference type="FunFam" id="3.40.50.1170:FF:000002">
    <property type="entry name" value="L-asparaginase 1"/>
    <property type="match status" value="1"/>
</dbReference>
<dbReference type="FunFam" id="3.40.50.40:FF:000001">
    <property type="entry name" value="L-asparaginase 1"/>
    <property type="match status" value="1"/>
</dbReference>
<dbReference type="Gene3D" id="3.40.50.40">
    <property type="match status" value="1"/>
</dbReference>
<dbReference type="Gene3D" id="3.40.50.1170">
    <property type="entry name" value="L-asparaginase, N-terminal domain"/>
    <property type="match status" value="1"/>
</dbReference>
<dbReference type="InterPro" id="IPR006033">
    <property type="entry name" value="AsnA_fam"/>
</dbReference>
<dbReference type="InterPro" id="IPR036152">
    <property type="entry name" value="Asp/glu_Ase-like_sf"/>
</dbReference>
<dbReference type="InterPro" id="IPR006034">
    <property type="entry name" value="Asparaginase/glutaminase-like"/>
</dbReference>
<dbReference type="InterPro" id="IPR020827">
    <property type="entry name" value="Asparaginase/glutaminase_AS1"/>
</dbReference>
<dbReference type="InterPro" id="IPR027475">
    <property type="entry name" value="Asparaginase/glutaminase_AS2"/>
</dbReference>
<dbReference type="InterPro" id="IPR040919">
    <property type="entry name" value="Asparaginase_C"/>
</dbReference>
<dbReference type="InterPro" id="IPR027473">
    <property type="entry name" value="L-asparaginase_C"/>
</dbReference>
<dbReference type="InterPro" id="IPR041725">
    <property type="entry name" value="L-asparaginase_I"/>
</dbReference>
<dbReference type="InterPro" id="IPR027474">
    <property type="entry name" value="L-asparaginase_N"/>
</dbReference>
<dbReference type="InterPro" id="IPR037152">
    <property type="entry name" value="L-asparaginase_N_sf"/>
</dbReference>
<dbReference type="NCBIfam" id="TIGR00519">
    <property type="entry name" value="asnASE_I"/>
    <property type="match status" value="1"/>
</dbReference>
<dbReference type="NCBIfam" id="NF006998">
    <property type="entry name" value="PRK09461.1"/>
    <property type="match status" value="1"/>
</dbReference>
<dbReference type="PANTHER" id="PTHR11707:SF28">
    <property type="entry name" value="60 KDA LYSOPHOSPHOLIPASE"/>
    <property type="match status" value="1"/>
</dbReference>
<dbReference type="PANTHER" id="PTHR11707">
    <property type="entry name" value="L-ASPARAGINASE"/>
    <property type="match status" value="1"/>
</dbReference>
<dbReference type="Pfam" id="PF00710">
    <property type="entry name" value="Asparaginase"/>
    <property type="match status" value="1"/>
</dbReference>
<dbReference type="Pfam" id="PF17763">
    <property type="entry name" value="Asparaginase_C"/>
    <property type="match status" value="1"/>
</dbReference>
<dbReference type="PIRSF" id="PIRSF001220">
    <property type="entry name" value="L-ASNase_gatD"/>
    <property type="match status" value="1"/>
</dbReference>
<dbReference type="PIRSF" id="PIRSF500176">
    <property type="entry name" value="L_ASNase"/>
    <property type="match status" value="1"/>
</dbReference>
<dbReference type="PRINTS" id="PR00139">
    <property type="entry name" value="ASNGLNASE"/>
</dbReference>
<dbReference type="SFLD" id="SFLDS00057">
    <property type="entry name" value="Glutaminase/Asparaginase"/>
    <property type="match status" value="1"/>
</dbReference>
<dbReference type="SMART" id="SM00870">
    <property type="entry name" value="Asparaginase"/>
    <property type="match status" value="1"/>
</dbReference>
<dbReference type="SUPFAM" id="SSF53774">
    <property type="entry name" value="Glutaminase/Asparaginase"/>
    <property type="match status" value="1"/>
</dbReference>
<dbReference type="PROSITE" id="PS00144">
    <property type="entry name" value="ASN_GLN_ASE_1"/>
    <property type="match status" value="1"/>
</dbReference>
<dbReference type="PROSITE" id="PS00917">
    <property type="entry name" value="ASN_GLN_ASE_2"/>
    <property type="match status" value="1"/>
</dbReference>
<dbReference type="PROSITE" id="PS51732">
    <property type="entry name" value="ASN_GLN_ASE_3"/>
    <property type="match status" value="1"/>
</dbReference>
<accession>P0A963</accession>
<accession>P18840</accession>
<proteinExistence type="inferred from homology"/>
<keyword id="KW-0963">Cytoplasm</keyword>
<keyword id="KW-0378">Hydrolase</keyword>
<keyword id="KW-1185">Reference proteome</keyword>
<feature type="chain" id="PRO_0000171080" description="L-asparaginase 1">
    <location>
        <begin position="1"/>
        <end position="338"/>
    </location>
</feature>
<feature type="domain" description="Asparaginase/glutaminase" evidence="2">
    <location>
        <begin position="4"/>
        <end position="329"/>
    </location>
</feature>
<feature type="active site" description="O-isoaspartyl threonine intermediate" evidence="3 4">
    <location>
        <position position="14"/>
    </location>
</feature>
<feature type="binding site" evidence="1">
    <location>
        <begin position="59"/>
        <end position="61"/>
    </location>
    <ligand>
        <name>substrate</name>
    </ligand>
</feature>
<feature type="binding site" evidence="1">
    <location>
        <begin position="91"/>
        <end position="92"/>
    </location>
    <ligand>
        <name>substrate</name>
    </ligand>
</feature>
<evidence type="ECO:0000250" key="1"/>
<evidence type="ECO:0000255" key="2">
    <source>
        <dbReference type="PROSITE-ProRule" id="PRU01068"/>
    </source>
</evidence>
<evidence type="ECO:0000255" key="3">
    <source>
        <dbReference type="PROSITE-ProRule" id="PRU10099"/>
    </source>
</evidence>
<evidence type="ECO:0000255" key="4">
    <source>
        <dbReference type="PROSITE-ProRule" id="PRU10100"/>
    </source>
</evidence>
<evidence type="ECO:0000305" key="5"/>